<evidence type="ECO:0000255" key="1">
    <source>
        <dbReference type="HAMAP-Rule" id="MF_00744"/>
    </source>
</evidence>
<reference key="1">
    <citation type="journal article" date="2008" name="PLoS ONE">
        <title>Genome biology of Actinobacillus pleuropneumoniae JL03, an isolate of serotype 3 prevalent in China.</title>
        <authorList>
            <person name="Xu Z."/>
            <person name="Zhou Y."/>
            <person name="Li L."/>
            <person name="Zhou R."/>
            <person name="Xiao S."/>
            <person name="Wan Y."/>
            <person name="Zhang S."/>
            <person name="Wang K."/>
            <person name="Li W."/>
            <person name="Li L."/>
            <person name="Jin H."/>
            <person name="Kang M."/>
            <person name="Dalai B."/>
            <person name="Li T."/>
            <person name="Liu L."/>
            <person name="Cheng Y."/>
            <person name="Zhang L."/>
            <person name="Xu T."/>
            <person name="Zheng H."/>
            <person name="Pu S."/>
            <person name="Wang B."/>
            <person name="Gu W."/>
            <person name="Zhang X.L."/>
            <person name="Zhu G.-F."/>
            <person name="Wang S."/>
            <person name="Zhao G.-P."/>
            <person name="Chen H."/>
        </authorList>
    </citation>
    <scope>NUCLEOTIDE SEQUENCE [LARGE SCALE GENOMIC DNA]</scope>
    <source>
        <strain>JL03</strain>
    </source>
</reference>
<organism>
    <name type="scientific">Actinobacillus pleuropneumoniae serotype 3 (strain JL03)</name>
    <dbReference type="NCBI Taxonomy" id="434271"/>
    <lineage>
        <taxon>Bacteria</taxon>
        <taxon>Pseudomonadati</taxon>
        <taxon>Pseudomonadota</taxon>
        <taxon>Gammaproteobacteria</taxon>
        <taxon>Pasteurellales</taxon>
        <taxon>Pasteurellaceae</taxon>
        <taxon>Actinobacillus</taxon>
    </lineage>
</organism>
<comment type="function">
    <text evidence="1">This regulatory protein, when combined with SAM (S-adenosylmethionine) represses the expression of the methionine regulon and of enzymes involved in SAM synthesis.</text>
</comment>
<comment type="subunit">
    <text evidence="1">Homodimer.</text>
</comment>
<comment type="subcellular location">
    <subcellularLocation>
        <location evidence="1">Cytoplasm</location>
    </subcellularLocation>
</comment>
<comment type="domain">
    <text>Does not bind DNA by a helix-turn-helix motif.</text>
</comment>
<comment type="similarity">
    <text evidence="1">Belongs to the MetJ family.</text>
</comment>
<name>METJ_ACTPJ</name>
<feature type="chain" id="PRO_1000191206" description="Met repressor">
    <location>
        <begin position="1"/>
        <end position="105"/>
    </location>
</feature>
<protein>
    <recommendedName>
        <fullName evidence="1">Met repressor</fullName>
    </recommendedName>
    <alternativeName>
        <fullName evidence="1">Met regulon regulatory protein MetJ</fullName>
    </alternativeName>
</protein>
<accession>B0BTJ8</accession>
<keyword id="KW-0028">Amino-acid biosynthesis</keyword>
<keyword id="KW-0963">Cytoplasm</keyword>
<keyword id="KW-0238">DNA-binding</keyword>
<keyword id="KW-0486">Methionine biosynthesis</keyword>
<keyword id="KW-0678">Repressor</keyword>
<keyword id="KW-0804">Transcription</keyword>
<keyword id="KW-0805">Transcription regulation</keyword>
<sequence length="105" mass="12156">MADWSGEYISPYAEHGKKSEQVKKITVSIPIKVLEILTNERTRRQIKNLRHATNSELLCEAFLHAFTGQPLPTDDDLMKERSDEIPEEAKAKMRELGIDPDNWQY</sequence>
<proteinExistence type="inferred from homology"/>
<dbReference type="EMBL" id="CP000687">
    <property type="protein sequence ID" value="ABY70512.1"/>
    <property type="molecule type" value="Genomic_DNA"/>
</dbReference>
<dbReference type="RefSeq" id="WP_005599655.1">
    <property type="nucleotide sequence ID" value="NC_010278.1"/>
</dbReference>
<dbReference type="SMR" id="B0BTJ8"/>
<dbReference type="GeneID" id="48600222"/>
<dbReference type="KEGG" id="apj:APJL_1964"/>
<dbReference type="HOGENOM" id="CLU_142318_0_0_6"/>
<dbReference type="Proteomes" id="UP000008547">
    <property type="component" value="Chromosome"/>
</dbReference>
<dbReference type="GO" id="GO:0005737">
    <property type="term" value="C:cytoplasm"/>
    <property type="evidence" value="ECO:0007669"/>
    <property type="project" value="UniProtKB-SubCell"/>
</dbReference>
<dbReference type="GO" id="GO:0003677">
    <property type="term" value="F:DNA binding"/>
    <property type="evidence" value="ECO:0007669"/>
    <property type="project" value="UniProtKB-KW"/>
</dbReference>
<dbReference type="GO" id="GO:0003700">
    <property type="term" value="F:DNA-binding transcription factor activity"/>
    <property type="evidence" value="ECO:0007669"/>
    <property type="project" value="InterPro"/>
</dbReference>
<dbReference type="GO" id="GO:0009086">
    <property type="term" value="P:methionine biosynthetic process"/>
    <property type="evidence" value="ECO:0007669"/>
    <property type="project" value="UniProtKB-UniRule"/>
</dbReference>
<dbReference type="GO" id="GO:0045892">
    <property type="term" value="P:negative regulation of DNA-templated transcription"/>
    <property type="evidence" value="ECO:0007669"/>
    <property type="project" value="UniProtKB-UniRule"/>
</dbReference>
<dbReference type="Gene3D" id="1.10.140.10">
    <property type="entry name" value="MET Apo-Repressor, subunit A"/>
    <property type="match status" value="1"/>
</dbReference>
<dbReference type="HAMAP" id="MF_00744">
    <property type="entry name" value="MetJ"/>
    <property type="match status" value="1"/>
</dbReference>
<dbReference type="InterPro" id="IPR002084">
    <property type="entry name" value="Met_repressor_MetJ"/>
</dbReference>
<dbReference type="InterPro" id="IPR023453">
    <property type="entry name" value="Met_repressor_MetJ_dom_sf"/>
</dbReference>
<dbReference type="InterPro" id="IPR010985">
    <property type="entry name" value="Ribbon_hlx_hlx"/>
</dbReference>
<dbReference type="NCBIfam" id="NF003622">
    <property type="entry name" value="PRK05264.1"/>
    <property type="match status" value="1"/>
</dbReference>
<dbReference type="Pfam" id="PF01340">
    <property type="entry name" value="MetJ"/>
    <property type="match status" value="1"/>
</dbReference>
<dbReference type="SUPFAM" id="SSF47598">
    <property type="entry name" value="Ribbon-helix-helix"/>
    <property type="match status" value="1"/>
</dbReference>
<gene>
    <name evidence="1" type="primary">metJ</name>
    <name type="ordered locus">APJL_1964</name>
</gene>